<dbReference type="EMBL" id="AE017180">
    <property type="protein sequence ID" value="AAR36268.1"/>
    <property type="molecule type" value="Genomic_DNA"/>
</dbReference>
<dbReference type="RefSeq" id="NP_953918.1">
    <property type="nucleotide sequence ID" value="NC_002939.5"/>
</dbReference>
<dbReference type="RefSeq" id="WP_010943505.1">
    <property type="nucleotide sequence ID" value="NC_002939.5"/>
</dbReference>
<dbReference type="SMR" id="Q748X4"/>
<dbReference type="FunCoup" id="Q748X4">
    <property type="interactions" value="698"/>
</dbReference>
<dbReference type="STRING" id="243231.GSU2876"/>
<dbReference type="EnsemblBacteria" id="AAR36268">
    <property type="protein sequence ID" value="AAR36268"/>
    <property type="gene ID" value="GSU2876"/>
</dbReference>
<dbReference type="KEGG" id="gsu:GSU2876"/>
<dbReference type="PATRIC" id="fig|243231.5.peg.2904"/>
<dbReference type="eggNOG" id="COG0102">
    <property type="taxonomic scope" value="Bacteria"/>
</dbReference>
<dbReference type="HOGENOM" id="CLU_082184_2_2_7"/>
<dbReference type="InParanoid" id="Q748X4"/>
<dbReference type="OrthoDB" id="9801330at2"/>
<dbReference type="Proteomes" id="UP000000577">
    <property type="component" value="Chromosome"/>
</dbReference>
<dbReference type="GO" id="GO:0022625">
    <property type="term" value="C:cytosolic large ribosomal subunit"/>
    <property type="evidence" value="ECO:0000318"/>
    <property type="project" value="GO_Central"/>
</dbReference>
<dbReference type="GO" id="GO:0005840">
    <property type="term" value="C:ribosome"/>
    <property type="evidence" value="ECO:0000318"/>
    <property type="project" value="GO_Central"/>
</dbReference>
<dbReference type="GO" id="GO:0003729">
    <property type="term" value="F:mRNA binding"/>
    <property type="evidence" value="ECO:0000318"/>
    <property type="project" value="GO_Central"/>
</dbReference>
<dbReference type="GO" id="GO:0003735">
    <property type="term" value="F:structural constituent of ribosome"/>
    <property type="evidence" value="ECO:0000318"/>
    <property type="project" value="GO_Central"/>
</dbReference>
<dbReference type="GO" id="GO:0017148">
    <property type="term" value="P:negative regulation of translation"/>
    <property type="evidence" value="ECO:0000318"/>
    <property type="project" value="GO_Central"/>
</dbReference>
<dbReference type="GO" id="GO:0006412">
    <property type="term" value="P:translation"/>
    <property type="evidence" value="ECO:0007669"/>
    <property type="project" value="UniProtKB-UniRule"/>
</dbReference>
<dbReference type="CDD" id="cd00392">
    <property type="entry name" value="Ribosomal_L13"/>
    <property type="match status" value="1"/>
</dbReference>
<dbReference type="FunFam" id="3.90.1180.10:FF:000001">
    <property type="entry name" value="50S ribosomal protein L13"/>
    <property type="match status" value="1"/>
</dbReference>
<dbReference type="Gene3D" id="3.90.1180.10">
    <property type="entry name" value="Ribosomal protein L13"/>
    <property type="match status" value="1"/>
</dbReference>
<dbReference type="HAMAP" id="MF_01366">
    <property type="entry name" value="Ribosomal_uL13"/>
    <property type="match status" value="1"/>
</dbReference>
<dbReference type="InterPro" id="IPR005822">
    <property type="entry name" value="Ribosomal_uL13"/>
</dbReference>
<dbReference type="InterPro" id="IPR005823">
    <property type="entry name" value="Ribosomal_uL13_bac-type"/>
</dbReference>
<dbReference type="InterPro" id="IPR036899">
    <property type="entry name" value="Ribosomal_uL13_sf"/>
</dbReference>
<dbReference type="NCBIfam" id="TIGR01066">
    <property type="entry name" value="rplM_bact"/>
    <property type="match status" value="1"/>
</dbReference>
<dbReference type="PANTHER" id="PTHR11545:SF2">
    <property type="entry name" value="LARGE RIBOSOMAL SUBUNIT PROTEIN UL13M"/>
    <property type="match status" value="1"/>
</dbReference>
<dbReference type="PANTHER" id="PTHR11545">
    <property type="entry name" value="RIBOSOMAL PROTEIN L13"/>
    <property type="match status" value="1"/>
</dbReference>
<dbReference type="Pfam" id="PF00572">
    <property type="entry name" value="Ribosomal_L13"/>
    <property type="match status" value="1"/>
</dbReference>
<dbReference type="PIRSF" id="PIRSF002181">
    <property type="entry name" value="Ribosomal_L13"/>
    <property type="match status" value="1"/>
</dbReference>
<dbReference type="SUPFAM" id="SSF52161">
    <property type="entry name" value="Ribosomal protein L13"/>
    <property type="match status" value="1"/>
</dbReference>
<organism>
    <name type="scientific">Geobacter sulfurreducens (strain ATCC 51573 / DSM 12127 / PCA)</name>
    <dbReference type="NCBI Taxonomy" id="243231"/>
    <lineage>
        <taxon>Bacteria</taxon>
        <taxon>Pseudomonadati</taxon>
        <taxon>Thermodesulfobacteriota</taxon>
        <taxon>Desulfuromonadia</taxon>
        <taxon>Geobacterales</taxon>
        <taxon>Geobacteraceae</taxon>
        <taxon>Geobacter</taxon>
    </lineage>
</organism>
<sequence length="143" mass="16017">MKTTKVAKKEEVTRDWYLVDADNKVLGRMATEIANILRGKKKPIYTPSVDTGDFVVVVNAAKLQLTGNKLADKMYYHHTGFPGGIKSITAGKLIEKKPEDLIRKAVKGMLPKNKLARHMLKKLKVYAGPEHPHEAQQPKTLDI</sequence>
<name>RL13_GEOSL</name>
<evidence type="ECO:0000255" key="1">
    <source>
        <dbReference type="HAMAP-Rule" id="MF_01366"/>
    </source>
</evidence>
<evidence type="ECO:0000305" key="2"/>
<reference key="1">
    <citation type="journal article" date="2003" name="Science">
        <title>Genome of Geobacter sulfurreducens: metal reduction in subsurface environments.</title>
        <authorList>
            <person name="Methe B.A."/>
            <person name="Nelson K.E."/>
            <person name="Eisen J.A."/>
            <person name="Paulsen I.T."/>
            <person name="Nelson W.C."/>
            <person name="Heidelberg J.F."/>
            <person name="Wu D."/>
            <person name="Wu M."/>
            <person name="Ward N.L."/>
            <person name="Beanan M.J."/>
            <person name="Dodson R.J."/>
            <person name="Madupu R."/>
            <person name="Brinkac L.M."/>
            <person name="Daugherty S.C."/>
            <person name="DeBoy R.T."/>
            <person name="Durkin A.S."/>
            <person name="Gwinn M.L."/>
            <person name="Kolonay J.F."/>
            <person name="Sullivan S.A."/>
            <person name="Haft D.H."/>
            <person name="Selengut J."/>
            <person name="Davidsen T.M."/>
            <person name="Zafar N."/>
            <person name="White O."/>
            <person name="Tran B."/>
            <person name="Romero C."/>
            <person name="Forberger H.A."/>
            <person name="Weidman J.F."/>
            <person name="Khouri H.M."/>
            <person name="Feldblyum T.V."/>
            <person name="Utterback T.R."/>
            <person name="Van Aken S.E."/>
            <person name="Lovley D.R."/>
            <person name="Fraser C.M."/>
        </authorList>
    </citation>
    <scope>NUCLEOTIDE SEQUENCE [LARGE SCALE GENOMIC DNA]</scope>
    <source>
        <strain>ATCC 51573 / DSM 12127 / PCA</strain>
    </source>
</reference>
<comment type="function">
    <text evidence="1">This protein is one of the early assembly proteins of the 50S ribosomal subunit, although it is not seen to bind rRNA by itself. It is important during the early stages of 50S assembly.</text>
</comment>
<comment type="subunit">
    <text evidence="1">Part of the 50S ribosomal subunit.</text>
</comment>
<comment type="similarity">
    <text evidence="1">Belongs to the universal ribosomal protein uL13 family.</text>
</comment>
<keyword id="KW-1185">Reference proteome</keyword>
<keyword id="KW-0687">Ribonucleoprotein</keyword>
<keyword id="KW-0689">Ribosomal protein</keyword>
<gene>
    <name evidence="1" type="primary">rplM</name>
    <name type="ordered locus">GSU2876</name>
</gene>
<feature type="chain" id="PRO_0000261730" description="Large ribosomal subunit protein uL13">
    <location>
        <begin position="1"/>
        <end position="143"/>
    </location>
</feature>
<protein>
    <recommendedName>
        <fullName evidence="1">Large ribosomal subunit protein uL13</fullName>
    </recommendedName>
    <alternativeName>
        <fullName evidence="2">50S ribosomal protein L13</fullName>
    </alternativeName>
</protein>
<accession>Q748X4</accession>
<proteinExistence type="inferred from homology"/>